<keyword id="KW-0479">Metal-binding</keyword>
<keyword id="KW-0687">Ribonucleoprotein</keyword>
<keyword id="KW-0689">Ribosomal protein</keyword>
<keyword id="KW-0694">RNA-binding</keyword>
<keyword id="KW-0699">rRNA-binding</keyword>
<keyword id="KW-0862">Zinc</keyword>
<dbReference type="EMBL" id="CP001127">
    <property type="protein sequence ID" value="ACF89561.1"/>
    <property type="molecule type" value="Genomic_DNA"/>
</dbReference>
<dbReference type="RefSeq" id="WP_000715284.1">
    <property type="nucleotide sequence ID" value="NC_011094.1"/>
</dbReference>
<dbReference type="SMR" id="B4TPV7"/>
<dbReference type="GeneID" id="66758349"/>
<dbReference type="KEGG" id="sew:SeSA_A4312"/>
<dbReference type="HOGENOM" id="CLU_114306_4_3_6"/>
<dbReference type="Proteomes" id="UP000001865">
    <property type="component" value="Chromosome"/>
</dbReference>
<dbReference type="GO" id="GO:1990904">
    <property type="term" value="C:ribonucleoprotein complex"/>
    <property type="evidence" value="ECO:0007669"/>
    <property type="project" value="UniProtKB-KW"/>
</dbReference>
<dbReference type="GO" id="GO:0005840">
    <property type="term" value="C:ribosome"/>
    <property type="evidence" value="ECO:0007669"/>
    <property type="project" value="UniProtKB-KW"/>
</dbReference>
<dbReference type="GO" id="GO:0046872">
    <property type="term" value="F:metal ion binding"/>
    <property type="evidence" value="ECO:0007669"/>
    <property type="project" value="UniProtKB-KW"/>
</dbReference>
<dbReference type="GO" id="GO:0019843">
    <property type="term" value="F:rRNA binding"/>
    <property type="evidence" value="ECO:0007669"/>
    <property type="project" value="UniProtKB-KW"/>
</dbReference>
<dbReference type="GO" id="GO:0003735">
    <property type="term" value="F:structural constituent of ribosome"/>
    <property type="evidence" value="ECO:0007669"/>
    <property type="project" value="InterPro"/>
</dbReference>
<dbReference type="GO" id="GO:0006412">
    <property type="term" value="P:translation"/>
    <property type="evidence" value="ECO:0007669"/>
    <property type="project" value="UniProtKB-UniRule"/>
</dbReference>
<dbReference type="FunFam" id="4.10.830.30:FF:000001">
    <property type="entry name" value="50S ribosomal protein L31"/>
    <property type="match status" value="1"/>
</dbReference>
<dbReference type="Gene3D" id="4.10.830.30">
    <property type="entry name" value="Ribosomal protein L31"/>
    <property type="match status" value="1"/>
</dbReference>
<dbReference type="HAMAP" id="MF_00501">
    <property type="entry name" value="Ribosomal_bL31_1"/>
    <property type="match status" value="1"/>
</dbReference>
<dbReference type="InterPro" id="IPR034704">
    <property type="entry name" value="Ribosomal_bL28/bL31-like_sf"/>
</dbReference>
<dbReference type="InterPro" id="IPR002150">
    <property type="entry name" value="Ribosomal_bL31"/>
</dbReference>
<dbReference type="InterPro" id="IPR027491">
    <property type="entry name" value="Ribosomal_bL31_A"/>
</dbReference>
<dbReference type="InterPro" id="IPR042105">
    <property type="entry name" value="Ribosomal_bL31_sf"/>
</dbReference>
<dbReference type="NCBIfam" id="TIGR00105">
    <property type="entry name" value="L31"/>
    <property type="match status" value="1"/>
</dbReference>
<dbReference type="NCBIfam" id="NF000612">
    <property type="entry name" value="PRK00019.1"/>
    <property type="match status" value="1"/>
</dbReference>
<dbReference type="NCBIfam" id="NF001809">
    <property type="entry name" value="PRK00528.1"/>
    <property type="match status" value="1"/>
</dbReference>
<dbReference type="PANTHER" id="PTHR33280">
    <property type="entry name" value="50S RIBOSOMAL PROTEIN L31, CHLOROPLASTIC"/>
    <property type="match status" value="1"/>
</dbReference>
<dbReference type="PANTHER" id="PTHR33280:SF6">
    <property type="entry name" value="LARGE RIBOSOMAL SUBUNIT PROTEIN BL31A"/>
    <property type="match status" value="1"/>
</dbReference>
<dbReference type="Pfam" id="PF01197">
    <property type="entry name" value="Ribosomal_L31"/>
    <property type="match status" value="1"/>
</dbReference>
<dbReference type="PRINTS" id="PR01249">
    <property type="entry name" value="RIBOSOMALL31"/>
</dbReference>
<dbReference type="SUPFAM" id="SSF143800">
    <property type="entry name" value="L28p-like"/>
    <property type="match status" value="1"/>
</dbReference>
<dbReference type="PROSITE" id="PS01143">
    <property type="entry name" value="RIBOSOMAL_L31"/>
    <property type="match status" value="1"/>
</dbReference>
<reference key="1">
    <citation type="journal article" date="2011" name="J. Bacteriol.">
        <title>Comparative genomics of 28 Salmonella enterica isolates: evidence for CRISPR-mediated adaptive sublineage evolution.</title>
        <authorList>
            <person name="Fricke W.F."/>
            <person name="Mammel M.K."/>
            <person name="McDermott P.F."/>
            <person name="Tartera C."/>
            <person name="White D.G."/>
            <person name="Leclerc J.E."/>
            <person name="Ravel J."/>
            <person name="Cebula T.A."/>
        </authorList>
    </citation>
    <scope>NUCLEOTIDE SEQUENCE [LARGE SCALE GENOMIC DNA]</scope>
    <source>
        <strain>CVM19633</strain>
    </source>
</reference>
<feature type="chain" id="PRO_1000126723" description="Large ribosomal subunit protein bL31">
    <location>
        <begin position="1"/>
        <end position="70"/>
    </location>
</feature>
<feature type="binding site" evidence="1">
    <location>
        <position position="16"/>
    </location>
    <ligand>
        <name>Zn(2+)</name>
        <dbReference type="ChEBI" id="CHEBI:29105"/>
    </ligand>
</feature>
<feature type="binding site" evidence="1">
    <location>
        <position position="18"/>
    </location>
    <ligand>
        <name>Zn(2+)</name>
        <dbReference type="ChEBI" id="CHEBI:29105"/>
    </ligand>
</feature>
<feature type="binding site" evidence="1">
    <location>
        <position position="37"/>
    </location>
    <ligand>
        <name>Zn(2+)</name>
        <dbReference type="ChEBI" id="CHEBI:29105"/>
    </ligand>
</feature>
<feature type="binding site" evidence="1">
    <location>
        <position position="40"/>
    </location>
    <ligand>
        <name>Zn(2+)</name>
        <dbReference type="ChEBI" id="CHEBI:29105"/>
    </ligand>
</feature>
<organism>
    <name type="scientific">Salmonella schwarzengrund (strain CVM19633)</name>
    <dbReference type="NCBI Taxonomy" id="439843"/>
    <lineage>
        <taxon>Bacteria</taxon>
        <taxon>Pseudomonadati</taxon>
        <taxon>Pseudomonadota</taxon>
        <taxon>Gammaproteobacteria</taxon>
        <taxon>Enterobacterales</taxon>
        <taxon>Enterobacteriaceae</taxon>
        <taxon>Salmonella</taxon>
    </lineage>
</organism>
<sequence>MKKGIHPNYVEITATCSCGNVIKTHSTVGHDLNLDVCGKCHPFFTGKQRVVDTGGRVERFNKRFSIPGSK</sequence>
<protein>
    <recommendedName>
        <fullName evidence="1">Large ribosomal subunit protein bL31</fullName>
    </recommendedName>
    <alternativeName>
        <fullName evidence="2">50S ribosomal protein L31</fullName>
    </alternativeName>
</protein>
<proteinExistence type="inferred from homology"/>
<comment type="function">
    <text evidence="1">Binds the 23S rRNA.</text>
</comment>
<comment type="cofactor">
    <cofactor evidence="1">
        <name>Zn(2+)</name>
        <dbReference type="ChEBI" id="CHEBI:29105"/>
    </cofactor>
    <text evidence="1">Binds 1 zinc ion per subunit.</text>
</comment>
<comment type="subunit">
    <text evidence="1">Part of the 50S ribosomal subunit.</text>
</comment>
<comment type="similarity">
    <text evidence="1">Belongs to the bacterial ribosomal protein bL31 family. Type A subfamily.</text>
</comment>
<gene>
    <name evidence="1" type="primary">rpmE</name>
    <name type="ordered locus">SeSA_A4312</name>
</gene>
<accession>B4TPV7</accession>
<evidence type="ECO:0000255" key="1">
    <source>
        <dbReference type="HAMAP-Rule" id="MF_00501"/>
    </source>
</evidence>
<evidence type="ECO:0000305" key="2"/>
<name>RL31_SALSV</name>